<proteinExistence type="inferred from homology"/>
<protein>
    <recommendedName>
        <fullName>Phenylalanine--tRNA ligase beta subunit</fullName>
        <ecNumber>6.1.1.20</ecNumber>
    </recommendedName>
    <alternativeName>
        <fullName>Phenylalanyl-tRNA synthetase beta subunit</fullName>
        <shortName>PheRS</shortName>
    </alternativeName>
</protein>
<name>SYFB_XYLFA</name>
<feature type="chain" id="PRO_0000126991" description="Phenylalanine--tRNA ligase beta subunit">
    <location>
        <begin position="1"/>
        <end position="792"/>
    </location>
</feature>
<feature type="domain" description="tRNA-binding">
    <location>
        <begin position="39"/>
        <end position="147"/>
    </location>
</feature>
<feature type="domain" description="B5">
    <location>
        <begin position="400"/>
        <end position="475"/>
    </location>
</feature>
<feature type="domain" description="FDX-ACB">
    <location>
        <begin position="698"/>
        <end position="791"/>
    </location>
</feature>
<feature type="binding site" evidence="1">
    <location>
        <position position="453"/>
    </location>
    <ligand>
        <name>Mg(2+)</name>
        <dbReference type="ChEBI" id="CHEBI:18420"/>
        <note>shared with alpha subunit</note>
    </ligand>
</feature>
<feature type="binding site" evidence="1">
    <location>
        <position position="459"/>
    </location>
    <ligand>
        <name>Mg(2+)</name>
        <dbReference type="ChEBI" id="CHEBI:18420"/>
        <note>shared with alpha subunit</note>
    </ligand>
</feature>
<feature type="binding site" evidence="1">
    <location>
        <position position="462"/>
    </location>
    <ligand>
        <name>Mg(2+)</name>
        <dbReference type="ChEBI" id="CHEBI:18420"/>
        <note>shared with alpha subunit</note>
    </ligand>
</feature>
<feature type="binding site" evidence="1">
    <location>
        <position position="463"/>
    </location>
    <ligand>
        <name>Mg(2+)</name>
        <dbReference type="ChEBI" id="CHEBI:18420"/>
        <note>shared with alpha subunit</note>
    </ligand>
</feature>
<evidence type="ECO:0000250" key="1"/>
<evidence type="ECO:0000305" key="2"/>
<organism>
    <name type="scientific">Xylella fastidiosa (strain 9a5c)</name>
    <dbReference type="NCBI Taxonomy" id="160492"/>
    <lineage>
        <taxon>Bacteria</taxon>
        <taxon>Pseudomonadati</taxon>
        <taxon>Pseudomonadota</taxon>
        <taxon>Gammaproteobacteria</taxon>
        <taxon>Lysobacterales</taxon>
        <taxon>Lysobacteraceae</taxon>
        <taxon>Xylella</taxon>
    </lineage>
</organism>
<keyword id="KW-0030">Aminoacyl-tRNA synthetase</keyword>
<keyword id="KW-0067">ATP-binding</keyword>
<keyword id="KW-0963">Cytoplasm</keyword>
<keyword id="KW-0436">Ligase</keyword>
<keyword id="KW-0460">Magnesium</keyword>
<keyword id="KW-0479">Metal-binding</keyword>
<keyword id="KW-0547">Nucleotide-binding</keyword>
<keyword id="KW-0648">Protein biosynthesis</keyword>
<keyword id="KW-0694">RNA-binding</keyword>
<keyword id="KW-0820">tRNA-binding</keyword>
<comment type="catalytic activity">
    <reaction>
        <text>tRNA(Phe) + L-phenylalanine + ATP = L-phenylalanyl-tRNA(Phe) + AMP + diphosphate + H(+)</text>
        <dbReference type="Rhea" id="RHEA:19413"/>
        <dbReference type="Rhea" id="RHEA-COMP:9668"/>
        <dbReference type="Rhea" id="RHEA-COMP:9699"/>
        <dbReference type="ChEBI" id="CHEBI:15378"/>
        <dbReference type="ChEBI" id="CHEBI:30616"/>
        <dbReference type="ChEBI" id="CHEBI:33019"/>
        <dbReference type="ChEBI" id="CHEBI:58095"/>
        <dbReference type="ChEBI" id="CHEBI:78442"/>
        <dbReference type="ChEBI" id="CHEBI:78531"/>
        <dbReference type="ChEBI" id="CHEBI:456215"/>
        <dbReference type="EC" id="6.1.1.20"/>
    </reaction>
</comment>
<comment type="cofactor">
    <cofactor evidence="1">
        <name>Mg(2+)</name>
        <dbReference type="ChEBI" id="CHEBI:18420"/>
    </cofactor>
    <text evidence="1">Binds 2 magnesium ions per tetramer.</text>
</comment>
<comment type="subunit">
    <text evidence="1">Tetramer of two alpha and two beta subunits.</text>
</comment>
<comment type="subcellular location">
    <subcellularLocation>
        <location evidence="1">Cytoplasm</location>
    </subcellularLocation>
</comment>
<comment type="similarity">
    <text evidence="2">Belongs to the phenylalanyl-tRNA synthetase beta subunit family. Type 1 subfamily.</text>
</comment>
<dbReference type="EC" id="6.1.1.20"/>
<dbReference type="EMBL" id="AE003849">
    <property type="protein sequence ID" value="AAF83552.1"/>
    <property type="molecule type" value="Genomic_DNA"/>
</dbReference>
<dbReference type="PIR" id="C82767">
    <property type="entry name" value="C82767"/>
</dbReference>
<dbReference type="RefSeq" id="WP_010893265.1">
    <property type="nucleotide sequence ID" value="NC_002488.3"/>
</dbReference>
<dbReference type="SMR" id="Q9PFD6"/>
<dbReference type="STRING" id="160492.XF_0742"/>
<dbReference type="KEGG" id="xfa:XF_0742"/>
<dbReference type="PATRIC" id="fig|160492.11.peg.782"/>
<dbReference type="eggNOG" id="COG0072">
    <property type="taxonomic scope" value="Bacteria"/>
</dbReference>
<dbReference type="eggNOG" id="COG0073">
    <property type="taxonomic scope" value="Bacteria"/>
</dbReference>
<dbReference type="HOGENOM" id="CLU_016891_0_0_6"/>
<dbReference type="Proteomes" id="UP000000812">
    <property type="component" value="Chromosome"/>
</dbReference>
<dbReference type="GO" id="GO:0009328">
    <property type="term" value="C:phenylalanine-tRNA ligase complex"/>
    <property type="evidence" value="ECO:0007669"/>
    <property type="project" value="TreeGrafter"/>
</dbReference>
<dbReference type="GO" id="GO:0005524">
    <property type="term" value="F:ATP binding"/>
    <property type="evidence" value="ECO:0007669"/>
    <property type="project" value="UniProtKB-UniRule"/>
</dbReference>
<dbReference type="GO" id="GO:0000287">
    <property type="term" value="F:magnesium ion binding"/>
    <property type="evidence" value="ECO:0007669"/>
    <property type="project" value="UniProtKB-UniRule"/>
</dbReference>
<dbReference type="GO" id="GO:0004826">
    <property type="term" value="F:phenylalanine-tRNA ligase activity"/>
    <property type="evidence" value="ECO:0007669"/>
    <property type="project" value="UniProtKB-UniRule"/>
</dbReference>
<dbReference type="GO" id="GO:0000049">
    <property type="term" value="F:tRNA binding"/>
    <property type="evidence" value="ECO:0007669"/>
    <property type="project" value="UniProtKB-KW"/>
</dbReference>
<dbReference type="GO" id="GO:0006432">
    <property type="term" value="P:phenylalanyl-tRNA aminoacylation"/>
    <property type="evidence" value="ECO:0007669"/>
    <property type="project" value="UniProtKB-UniRule"/>
</dbReference>
<dbReference type="CDD" id="cd00769">
    <property type="entry name" value="PheRS_beta_core"/>
    <property type="match status" value="1"/>
</dbReference>
<dbReference type="CDD" id="cd02796">
    <property type="entry name" value="tRNA_bind_bactPheRS"/>
    <property type="match status" value="1"/>
</dbReference>
<dbReference type="FunFam" id="2.40.50.140:FF:000045">
    <property type="entry name" value="Phenylalanine--tRNA ligase beta subunit"/>
    <property type="match status" value="1"/>
</dbReference>
<dbReference type="FunFam" id="3.30.56.10:FF:000002">
    <property type="entry name" value="Phenylalanine--tRNA ligase beta subunit"/>
    <property type="match status" value="1"/>
</dbReference>
<dbReference type="FunFam" id="3.30.70.380:FF:000001">
    <property type="entry name" value="Phenylalanine--tRNA ligase beta subunit"/>
    <property type="match status" value="1"/>
</dbReference>
<dbReference type="FunFam" id="3.30.930.10:FF:000022">
    <property type="entry name" value="Phenylalanine--tRNA ligase beta subunit"/>
    <property type="match status" value="1"/>
</dbReference>
<dbReference type="FunFam" id="3.50.40.10:FF:000001">
    <property type="entry name" value="Phenylalanine--tRNA ligase beta subunit"/>
    <property type="match status" value="1"/>
</dbReference>
<dbReference type="Gene3D" id="3.30.56.10">
    <property type="match status" value="2"/>
</dbReference>
<dbReference type="Gene3D" id="3.30.930.10">
    <property type="entry name" value="Bira Bifunctional Protein, Domain 2"/>
    <property type="match status" value="1"/>
</dbReference>
<dbReference type="Gene3D" id="3.30.70.380">
    <property type="entry name" value="Ferrodoxin-fold anticodon-binding domain"/>
    <property type="match status" value="1"/>
</dbReference>
<dbReference type="Gene3D" id="2.40.50.140">
    <property type="entry name" value="Nucleic acid-binding proteins"/>
    <property type="match status" value="1"/>
</dbReference>
<dbReference type="Gene3D" id="3.50.40.10">
    <property type="entry name" value="Phenylalanyl-trna Synthetase, Chain B, domain 3"/>
    <property type="match status" value="1"/>
</dbReference>
<dbReference type="HAMAP" id="MF_00283">
    <property type="entry name" value="Phe_tRNA_synth_beta1"/>
    <property type="match status" value="1"/>
</dbReference>
<dbReference type="InterPro" id="IPR045864">
    <property type="entry name" value="aa-tRNA-synth_II/BPL/LPL"/>
</dbReference>
<dbReference type="InterPro" id="IPR005146">
    <property type="entry name" value="B3/B4_tRNA-bd"/>
</dbReference>
<dbReference type="InterPro" id="IPR009061">
    <property type="entry name" value="DNA-bd_dom_put_sf"/>
</dbReference>
<dbReference type="InterPro" id="IPR005121">
    <property type="entry name" value="Fdx_antiC-bd"/>
</dbReference>
<dbReference type="InterPro" id="IPR036690">
    <property type="entry name" value="Fdx_antiC-bd_sf"/>
</dbReference>
<dbReference type="InterPro" id="IPR012340">
    <property type="entry name" value="NA-bd_OB-fold"/>
</dbReference>
<dbReference type="InterPro" id="IPR045060">
    <property type="entry name" value="Phe-tRNA-ligase_IIc_bsu"/>
</dbReference>
<dbReference type="InterPro" id="IPR004532">
    <property type="entry name" value="Phe-tRNA-ligase_IIc_bsu_bact"/>
</dbReference>
<dbReference type="InterPro" id="IPR020825">
    <property type="entry name" value="Phe-tRNA_synthase-like_B3/B4"/>
</dbReference>
<dbReference type="InterPro" id="IPR041616">
    <property type="entry name" value="PheRS_beta_core"/>
</dbReference>
<dbReference type="InterPro" id="IPR002547">
    <property type="entry name" value="tRNA-bd_dom"/>
</dbReference>
<dbReference type="InterPro" id="IPR033714">
    <property type="entry name" value="tRNA_bind_bactPheRS"/>
</dbReference>
<dbReference type="InterPro" id="IPR005147">
    <property type="entry name" value="tRNA_synthase_B5-dom"/>
</dbReference>
<dbReference type="NCBIfam" id="TIGR00472">
    <property type="entry name" value="pheT_bact"/>
    <property type="match status" value="1"/>
</dbReference>
<dbReference type="NCBIfam" id="NF045760">
    <property type="entry name" value="YtpR"/>
    <property type="match status" value="1"/>
</dbReference>
<dbReference type="PANTHER" id="PTHR10947:SF0">
    <property type="entry name" value="PHENYLALANINE--TRNA LIGASE BETA SUBUNIT"/>
    <property type="match status" value="1"/>
</dbReference>
<dbReference type="PANTHER" id="PTHR10947">
    <property type="entry name" value="PHENYLALANYL-TRNA SYNTHETASE BETA CHAIN AND LEUCINE-RICH REPEAT-CONTAINING PROTEIN 47"/>
    <property type="match status" value="1"/>
</dbReference>
<dbReference type="Pfam" id="PF03483">
    <property type="entry name" value="B3_4"/>
    <property type="match status" value="1"/>
</dbReference>
<dbReference type="Pfam" id="PF03484">
    <property type="entry name" value="B5"/>
    <property type="match status" value="1"/>
</dbReference>
<dbReference type="Pfam" id="PF03147">
    <property type="entry name" value="FDX-ACB"/>
    <property type="match status" value="1"/>
</dbReference>
<dbReference type="Pfam" id="PF01588">
    <property type="entry name" value="tRNA_bind"/>
    <property type="match status" value="1"/>
</dbReference>
<dbReference type="Pfam" id="PF17759">
    <property type="entry name" value="tRNA_synthFbeta"/>
    <property type="match status" value="1"/>
</dbReference>
<dbReference type="SMART" id="SM00873">
    <property type="entry name" value="B3_4"/>
    <property type="match status" value="1"/>
</dbReference>
<dbReference type="SMART" id="SM00874">
    <property type="entry name" value="B5"/>
    <property type="match status" value="1"/>
</dbReference>
<dbReference type="SMART" id="SM00896">
    <property type="entry name" value="FDX-ACB"/>
    <property type="match status" value="1"/>
</dbReference>
<dbReference type="SUPFAM" id="SSF54991">
    <property type="entry name" value="Anticodon-binding domain of PheRS"/>
    <property type="match status" value="1"/>
</dbReference>
<dbReference type="SUPFAM" id="SSF55681">
    <property type="entry name" value="Class II aaRS and biotin synthetases"/>
    <property type="match status" value="1"/>
</dbReference>
<dbReference type="SUPFAM" id="SSF50249">
    <property type="entry name" value="Nucleic acid-binding proteins"/>
    <property type="match status" value="1"/>
</dbReference>
<dbReference type="SUPFAM" id="SSF56037">
    <property type="entry name" value="PheT/TilS domain"/>
    <property type="match status" value="1"/>
</dbReference>
<dbReference type="SUPFAM" id="SSF46955">
    <property type="entry name" value="Putative DNA-binding domain"/>
    <property type="match status" value="1"/>
</dbReference>
<dbReference type="PROSITE" id="PS51483">
    <property type="entry name" value="B5"/>
    <property type="match status" value="1"/>
</dbReference>
<dbReference type="PROSITE" id="PS51447">
    <property type="entry name" value="FDX_ACB"/>
    <property type="match status" value="1"/>
</dbReference>
<dbReference type="PROSITE" id="PS50886">
    <property type="entry name" value="TRBD"/>
    <property type="match status" value="1"/>
</dbReference>
<gene>
    <name type="primary">pheT</name>
    <name type="ordered locus">XF_0742</name>
</gene>
<sequence>MKFSENWLRNHVPIQANRDVLVATLTAIGLEVENVAVLGEALDLIVVARIVNVVPHPESDRLQICQVDAAQDTLLQIVCGASNVRPGLVVPLALLGAKIGALTIKSTTLRGVESNGMLCSAKELGLDTEASGLMELPDDAPIGTPLADYLALPDASIEIKLTPNRADCFSVRGIAFDVAAACASEVTPLHIDEIPAVSARTLPVELHAGANAPRYCGCVIEGIDPAAPTPVWMAERLRRSGIRPVSLLVDITQYVMLELGQPMHAFDVDTLRGPIGVRLSRNDEALKLLDGRTVVLDNDFLVVTDADQPIALAGLIGGWETRITDTTVNVFLEAAHFAPVAIMGRGRKLGLHTDASHRFERGVDPALPPQAIAFATRLILELAGGKPGSLIRVELPEYLPAPASILLRRTRIARLLGIVIDDVEVERILHALGMQVTTQAEGWRVVAPSRRFDIAIEEDLIEELVRIRGYEHLPTALPIGASHIAMPSETRLDMTSVRRQLIARELQETINYAFIDAELLRRWQLNTGQVMLMNPLSAELAVIRPRLLPGLVAALGRNIARQLERVRLFELGNVFTASDEAGAAPLETQHVAAAVCGDAFALQWGEQARKVDFYDLKGDLESLAAASGAVLTFHSSAQPWGHPGRSADVWCDDTCIGWIGQLHPALTQTLEINVDVIAFELALEPLVRGALPRAHALSRFPFVRRDLACVVPEHVTWSELAITVRDVIGSLLRDVKLFDRYVGKGIEPGFKSLAIGLILQDDTRTLIDRDVDDIMAKVVMAIQQRHDVRIRS</sequence>
<accession>Q9PFD6</accession>
<reference key="1">
    <citation type="journal article" date="2000" name="Nature">
        <title>The genome sequence of the plant pathogen Xylella fastidiosa.</title>
        <authorList>
            <person name="Simpson A.J.G."/>
            <person name="Reinach F.C."/>
            <person name="Arruda P."/>
            <person name="Abreu F.A."/>
            <person name="Acencio M."/>
            <person name="Alvarenga R."/>
            <person name="Alves L.M.C."/>
            <person name="Araya J.E."/>
            <person name="Baia G.S."/>
            <person name="Baptista C.S."/>
            <person name="Barros M.H."/>
            <person name="Bonaccorsi E.D."/>
            <person name="Bordin S."/>
            <person name="Bove J.M."/>
            <person name="Briones M.R.S."/>
            <person name="Bueno M.R.P."/>
            <person name="Camargo A.A."/>
            <person name="Camargo L.E.A."/>
            <person name="Carraro D.M."/>
            <person name="Carrer H."/>
            <person name="Colauto N.B."/>
            <person name="Colombo C."/>
            <person name="Costa F.F."/>
            <person name="Costa M.C.R."/>
            <person name="Costa-Neto C.M."/>
            <person name="Coutinho L.L."/>
            <person name="Cristofani M."/>
            <person name="Dias-Neto E."/>
            <person name="Docena C."/>
            <person name="El-Dorry H."/>
            <person name="Facincani A.P."/>
            <person name="Ferreira A.J.S."/>
            <person name="Ferreira V.C.A."/>
            <person name="Ferro J.A."/>
            <person name="Fraga J.S."/>
            <person name="Franca S.C."/>
            <person name="Franco M.C."/>
            <person name="Frohme M."/>
            <person name="Furlan L.R."/>
            <person name="Garnier M."/>
            <person name="Goldman G.H."/>
            <person name="Goldman M.H.S."/>
            <person name="Gomes S.L."/>
            <person name="Gruber A."/>
            <person name="Ho P.L."/>
            <person name="Hoheisel J.D."/>
            <person name="Junqueira M.L."/>
            <person name="Kemper E.L."/>
            <person name="Kitajima J.P."/>
            <person name="Krieger J.E."/>
            <person name="Kuramae E.E."/>
            <person name="Laigret F."/>
            <person name="Lambais M.R."/>
            <person name="Leite L.C.C."/>
            <person name="Lemos E.G.M."/>
            <person name="Lemos M.V.F."/>
            <person name="Lopes S.A."/>
            <person name="Lopes C.R."/>
            <person name="Machado J.A."/>
            <person name="Machado M.A."/>
            <person name="Madeira A.M.B.N."/>
            <person name="Madeira H.M.F."/>
            <person name="Marino C.L."/>
            <person name="Marques M.V."/>
            <person name="Martins E.A.L."/>
            <person name="Martins E.M.F."/>
            <person name="Matsukuma A.Y."/>
            <person name="Menck C.F.M."/>
            <person name="Miracca E.C."/>
            <person name="Miyaki C.Y."/>
            <person name="Monteiro-Vitorello C.B."/>
            <person name="Moon D.H."/>
            <person name="Nagai M.A."/>
            <person name="Nascimento A.L.T.O."/>
            <person name="Netto L.E.S."/>
            <person name="Nhani A. Jr."/>
            <person name="Nobrega F.G."/>
            <person name="Nunes L.R."/>
            <person name="Oliveira M.A."/>
            <person name="de Oliveira M.C."/>
            <person name="de Oliveira R.C."/>
            <person name="Palmieri D.A."/>
            <person name="Paris A."/>
            <person name="Peixoto B.R."/>
            <person name="Pereira G.A.G."/>
            <person name="Pereira H.A. Jr."/>
            <person name="Pesquero J.B."/>
            <person name="Quaggio R.B."/>
            <person name="Roberto P.G."/>
            <person name="Rodrigues V."/>
            <person name="de Rosa A.J.M."/>
            <person name="de Rosa V.E. Jr."/>
            <person name="de Sa R.G."/>
            <person name="Santelli R.V."/>
            <person name="Sawasaki H.E."/>
            <person name="da Silva A.C.R."/>
            <person name="da Silva A.M."/>
            <person name="da Silva F.R."/>
            <person name="Silva W.A. Jr."/>
            <person name="da Silveira J.F."/>
            <person name="Silvestri M.L.Z."/>
            <person name="Siqueira W.J."/>
            <person name="de Souza A.A."/>
            <person name="de Souza A.P."/>
            <person name="Terenzi M.F."/>
            <person name="Truffi D."/>
            <person name="Tsai S.M."/>
            <person name="Tsuhako M.H."/>
            <person name="Vallada H."/>
            <person name="Van Sluys M.A."/>
            <person name="Verjovski-Almeida S."/>
            <person name="Vettore A.L."/>
            <person name="Zago M.A."/>
            <person name="Zatz M."/>
            <person name="Meidanis J."/>
            <person name="Setubal J.C."/>
        </authorList>
    </citation>
    <scope>NUCLEOTIDE SEQUENCE [LARGE SCALE GENOMIC DNA]</scope>
    <source>
        <strain>9a5c</strain>
    </source>
</reference>